<gene>
    <name type="primary">ywle</name>
</gene>
<name>PAP_GEOSE</name>
<comment type="function">
    <text evidence="3">Catalyzes the specific dephosphorylation of phosphoarginine residues in proteins. Probably counteracts the protein arginine kinase McsB in vivo. Exhibits almost no activity against pTyr peptides. Protein arginine phosphorylation has a physiologically important role and is involved in the regulation of many critical cellular processes, such as protein homeostasis, motility, competence, and stringent and stress responses, by regulating gene expression and protein activity.</text>
</comment>
<comment type="catalytic activity">
    <reaction evidence="3">
        <text>N(omega)-phospho-L-arginyl-[protein] + H2O = L-arginyl-[protein] + phosphate</text>
        <dbReference type="Rhea" id="RHEA:43380"/>
        <dbReference type="Rhea" id="RHEA-COMP:10532"/>
        <dbReference type="Rhea" id="RHEA-COMP:10533"/>
        <dbReference type="ChEBI" id="CHEBI:15377"/>
        <dbReference type="ChEBI" id="CHEBI:29965"/>
        <dbReference type="ChEBI" id="CHEBI:43474"/>
        <dbReference type="ChEBI" id="CHEBI:83226"/>
        <dbReference type="EC" id="3.9.1.2"/>
    </reaction>
</comment>
<comment type="activity regulation">
    <text evidence="4">Irreversibly inhibited by the synthetic inhibitor cyc-SeCN-amidine, which inactivates the enzyme by inducing disulfide bond formation between the two active site cysteine residues Cys-9 and Cys-14.</text>
</comment>
<comment type="biophysicochemical properties">
    <kinetics>
        <KM evidence="3 4">100 mM for p-nitrophenyl-phosphate (at 25 degrees Celsius and pH 7.6)</KM>
        <KM evidence="3 4">124.52 mM for p-nitrophenyl-phosphate (at 40 degrees Celsius and pH 8.0)</KM>
        <text evidence="3 4">kcat is 1.12 sec(-1) with pNPP as substrate (at 25 degrees Celsius and pH 7.6) (PubMed:23838530) and 3.2 sec(-1) with pNPP as substrate (at 40 degrees Celsius and pH 8.0) (PubMed:23770242). pNPP is a phosphotyrosine mimicking compound.</text>
    </kinetics>
</comment>
<comment type="subunit">
    <text evidence="5">Is present in solution as a mixture of monomers, dimers and higher order oligomers (trimers and tetramers).</text>
</comment>
<comment type="biotechnology">
    <text evidence="5">An engineered YwlE Ala-9 mutant can be used as a phosphatase trap that efficiently captures arginine-phosphorylated proteins but cannot hydrolyze the captured substrates, thus facilitating identification of phosphoarginine sites in the large pool of cellular protein modifications. Therefore, this novel tool for the selective enrichment and subsequent MS analysis of arginine phosphorylation should facilitate the investigation of this highly overlooked protein modification, in particular in eukaryotic samples.</text>
</comment>
<comment type="similarity">
    <text evidence="6">Belongs to the low molecular weight phosphotyrosine protein phosphatase family.</text>
</comment>
<sequence length="148" mass="16300">MPYRILFVCTGNTCRSPMAAALLENKQLPGVEVKSAGVFAAEGSEASVHAKMVLKEKGIEAAHRSSQLKKEHIDWATHVLAMTSGHKDMIVERFPEAKDKTFTLKQFVSGTDGDIADPFGGPIEVYRAARDELETLIDRLAEKLQTEQ</sequence>
<protein>
    <recommendedName>
        <fullName>Protein-arginine-phosphatase</fullName>
        <shortName>PAP</shortName>
        <ecNumber evidence="3">3.9.1.2</ecNumber>
    </recommendedName>
    <alternativeName>
        <fullName>Phosphoarginine phosphatase</fullName>
    </alternativeName>
</protein>
<keyword id="KW-0002">3D-structure</keyword>
<keyword id="KW-0378">Hydrolase</keyword>
<keyword id="KW-0904">Protein phosphatase</keyword>
<proteinExistence type="evidence at protein level"/>
<accession>S0F332</accession>
<evidence type="ECO:0000250" key="1"/>
<evidence type="ECO:0000250" key="2">
    <source>
        <dbReference type="UniProtKB" id="P11064"/>
    </source>
</evidence>
<evidence type="ECO:0000269" key="3">
    <source>
    </source>
</evidence>
<evidence type="ECO:0000269" key="4">
    <source>
    </source>
</evidence>
<evidence type="ECO:0000269" key="5">
    <source>
    </source>
</evidence>
<evidence type="ECO:0000305" key="6"/>
<evidence type="ECO:0007829" key="7">
    <source>
        <dbReference type="PDB" id="4PIC"/>
    </source>
</evidence>
<dbReference type="EC" id="3.9.1.2" evidence="3"/>
<dbReference type="EMBL" id="HG316025">
    <property type="protein sequence ID" value="CDF77252.1"/>
    <property type="molecule type" value="Genomic_DNA"/>
</dbReference>
<dbReference type="RefSeq" id="WP_033017317.1">
    <property type="nucleotide sequence ID" value="NZ_RCTH01000008.1"/>
</dbReference>
<dbReference type="PDB" id="4PIC">
    <property type="method" value="X-ray"/>
    <property type="resolution" value="1.40 A"/>
    <property type="chains" value="A/B=1-148"/>
</dbReference>
<dbReference type="PDBsum" id="4PIC"/>
<dbReference type="SMR" id="S0F332"/>
<dbReference type="KEGG" id="ag:CDF77252"/>
<dbReference type="BRENDA" id="3.9.1.2">
    <property type="organism ID" value="623"/>
</dbReference>
<dbReference type="EvolutionaryTrace" id="S0F332"/>
<dbReference type="GO" id="GO:0098627">
    <property type="term" value="F:protein arginine phosphatase activity"/>
    <property type="evidence" value="ECO:0007669"/>
    <property type="project" value="UniProtKB-EC"/>
</dbReference>
<dbReference type="GO" id="GO:0004725">
    <property type="term" value="F:protein tyrosine phosphatase activity"/>
    <property type="evidence" value="ECO:0007669"/>
    <property type="project" value="InterPro"/>
</dbReference>
<dbReference type="CDD" id="cd16344">
    <property type="entry name" value="LMWPAP"/>
    <property type="match status" value="1"/>
</dbReference>
<dbReference type="Gene3D" id="3.40.50.2300">
    <property type="match status" value="1"/>
</dbReference>
<dbReference type="InterPro" id="IPR050438">
    <property type="entry name" value="LMW_PTPase"/>
</dbReference>
<dbReference type="InterPro" id="IPR023485">
    <property type="entry name" value="Ptyr_pPase"/>
</dbReference>
<dbReference type="InterPro" id="IPR036196">
    <property type="entry name" value="Ptyr_pPase_sf"/>
</dbReference>
<dbReference type="InterPro" id="IPR017867">
    <property type="entry name" value="Tyr_phospatase_low_mol_wt"/>
</dbReference>
<dbReference type="PANTHER" id="PTHR11717">
    <property type="entry name" value="LOW MOLECULAR WEIGHT PROTEIN TYROSINE PHOSPHATASE"/>
    <property type="match status" value="1"/>
</dbReference>
<dbReference type="PANTHER" id="PTHR11717:SF31">
    <property type="entry name" value="LOW MOLECULAR WEIGHT PROTEIN-TYROSINE-PHOSPHATASE ETP-RELATED"/>
    <property type="match status" value="1"/>
</dbReference>
<dbReference type="Pfam" id="PF01451">
    <property type="entry name" value="LMWPc"/>
    <property type="match status" value="1"/>
</dbReference>
<dbReference type="PRINTS" id="PR00719">
    <property type="entry name" value="LMWPTPASE"/>
</dbReference>
<dbReference type="SMART" id="SM00226">
    <property type="entry name" value="LMWPc"/>
    <property type="match status" value="1"/>
</dbReference>
<dbReference type="SUPFAM" id="SSF52788">
    <property type="entry name" value="Phosphotyrosine protein phosphatases I"/>
    <property type="match status" value="1"/>
</dbReference>
<reference key="1">
    <citation type="submission" date="2013-06" db="EMBL/GenBank/DDBJ databases">
        <title>Characterization of the arginine phosphatase YwlE from Geobacillus stearothermophilus.</title>
        <authorList>
            <person name="Fuhrmann Jakob J.F."/>
            <person name="Clausen Tim T.C."/>
        </authorList>
    </citation>
    <scope>NUCLEOTIDE SEQUENCE [GENOMIC DNA]</scope>
    <source>
        <strain>ATCC 12980 / DSM 22 / CCM 2062 / JCM 2501 / NBRC 12550 / NCIMB 8923 / NCTC 10339 / R-35646 / VKM B-510</strain>
    </source>
</reference>
<reference key="2">
    <citation type="journal article" date="2013" name="ACS Chem. Biol.">
        <title>Targeting the arginine phosphatase YwlE with a catalytic redox-based inhibitor.</title>
        <authorList>
            <person name="Fuhrmann J."/>
            <person name="Subramanian V."/>
            <person name="Thompson P.R."/>
        </authorList>
    </citation>
    <scope>KINETIC PARAMETERS</scope>
    <scope>ACTIVITY REGULATION</scope>
    <scope>ACTIVE SITE</scope>
    <scope>MUTAGENESIS OF CYS-9 AND CYS-14</scope>
</reference>
<reference key="3">
    <citation type="journal article" date="2013" name="Cell Rep.">
        <title>Structural basis for recognizing phosphoarginine and evolving residue-specific protein phosphatases in gram-positive bacteria.</title>
        <authorList>
            <person name="Fuhrmann J."/>
            <person name="Mierzwa B."/>
            <person name="Trentini D.B."/>
            <person name="Spiess S."/>
            <person name="Lehner A."/>
            <person name="Charpentier E."/>
            <person name="Clausen T."/>
        </authorList>
    </citation>
    <scope>FUNCTION AS AN ARGININE PHOSPHATASE</scope>
    <scope>CATALYTIC ACTIVITY</scope>
    <scope>SUBSTRATE SPECIFICITY</scope>
    <scope>KINETIC PARAMETERS</scope>
    <scope>MUTAGENESIS OF THR-13</scope>
    <source>
        <strain>ATCC 12980 / DSM 22 / CCM 2062 / JCM 2501 / NBRC 12550 / NCIMB 8923 / NCTC 10339 / R-35646 / VKM B-510</strain>
    </source>
</reference>
<reference key="4">
    <citation type="journal article" date="2014" name="Mol. Cell. Proteomics">
        <title>Chasing phosphoarginine proteins: development of a selective enrichment method using a phosphatase trap.</title>
        <authorList>
            <person name="Trentini D.B."/>
            <person name="Fuhrmann J."/>
            <person name="Mechtler K."/>
            <person name="Clausen T."/>
        </authorList>
    </citation>
    <scope>X-RAY CRYSTALLOGRAPHY (1.40 ANGSTROMS) IN COMPLEX WITH PHOSPHATE</scope>
    <scope>BIOTECHNOLOGY</scope>
    <scope>SUBUNIT</scope>
    <scope>MUTAGENESIS OF CYS-9 AND ASP-117</scope>
</reference>
<feature type="chain" id="PRO_0000429921" description="Protein-arginine-phosphatase">
    <location>
        <begin position="1"/>
        <end position="148"/>
    </location>
</feature>
<feature type="active site" description="Nucleophile" evidence="4">
    <location>
        <position position="9"/>
    </location>
</feature>
<feature type="active site" evidence="2">
    <location>
        <position position="15"/>
    </location>
</feature>
<feature type="active site" description="Proton donor" evidence="2">
    <location>
        <position position="117"/>
    </location>
</feature>
<feature type="binding site" evidence="1">
    <location>
        <begin position="10"/>
        <end position="15"/>
    </location>
    <ligand>
        <name>substrate</name>
    </ligand>
</feature>
<feature type="site" description="Important for substrate discrimination">
    <location>
        <position position="13"/>
    </location>
</feature>
<feature type="mutagenesis site" description="Mutant stably binds to the arginine-phosphorylated substrate." evidence="4 5">
    <original>C</original>
    <variation>A</variation>
    <location>
        <position position="9"/>
    </location>
</feature>
<feature type="mutagenesis site" description="Complete loss of phosphatase activity." evidence="4 5">
    <original>C</original>
    <variation>S</variation>
    <location>
        <position position="9"/>
    </location>
</feature>
<feature type="mutagenesis site" description="Strongly decreases p-Arg phosphatase activity and markedly increases p-Tyr phosphatase activity." evidence="3">
    <original>T</original>
    <variation>I</variation>
    <location>
        <position position="13"/>
    </location>
</feature>
<feature type="mutagenesis site" description="6-fold reduction in phosphatase activity with pNPP as substrate. Nearly no effect on substrate affinity." evidence="4">
    <original>C</original>
    <variation>S</variation>
    <location>
        <position position="14"/>
    </location>
</feature>
<feature type="mutagenesis site" description="Mutant does not bind to the arginine-phosphorylated substrate." evidence="5">
    <original>D</original>
    <variation>A</variation>
    <variation>N</variation>
    <location>
        <position position="117"/>
    </location>
</feature>
<feature type="strand" evidence="7">
    <location>
        <begin position="3"/>
        <end position="14"/>
    </location>
</feature>
<feature type="helix" evidence="7">
    <location>
        <begin position="15"/>
        <end position="25"/>
    </location>
</feature>
<feature type="strand" evidence="7">
    <location>
        <begin position="31"/>
        <end position="37"/>
    </location>
</feature>
<feature type="helix" evidence="7">
    <location>
        <begin position="48"/>
        <end position="56"/>
    </location>
</feature>
<feature type="helix" evidence="7">
    <location>
        <begin position="70"/>
        <end position="75"/>
    </location>
</feature>
<feature type="strand" evidence="7">
    <location>
        <begin position="77"/>
        <end position="83"/>
    </location>
</feature>
<feature type="helix" evidence="7">
    <location>
        <begin position="84"/>
        <end position="93"/>
    </location>
</feature>
<feature type="helix" evidence="7">
    <location>
        <begin position="95"/>
        <end position="100"/>
    </location>
</feature>
<feature type="strand" evidence="7">
    <location>
        <begin position="101"/>
        <end position="103"/>
    </location>
</feature>
<feature type="helix" evidence="7">
    <location>
        <begin position="104"/>
        <end position="109"/>
    </location>
</feature>
<feature type="helix" evidence="7">
    <location>
        <begin position="123"/>
        <end position="148"/>
    </location>
</feature>
<organism>
    <name type="scientific">Geobacillus stearothermophilus</name>
    <name type="common">Bacillus stearothermophilus</name>
    <dbReference type="NCBI Taxonomy" id="1422"/>
    <lineage>
        <taxon>Bacteria</taxon>
        <taxon>Bacillati</taxon>
        <taxon>Bacillota</taxon>
        <taxon>Bacilli</taxon>
        <taxon>Bacillales</taxon>
        <taxon>Anoxybacillaceae</taxon>
        <taxon>Geobacillus</taxon>
    </lineage>
</organism>